<accession>B5Z8H3</accession>
<name>DEOB_HELPG</name>
<protein>
    <recommendedName>
        <fullName evidence="1">Phosphopentomutase</fullName>
        <ecNumber evidence="1">5.4.2.7</ecNumber>
    </recommendedName>
    <alternativeName>
        <fullName evidence="1">Phosphodeoxyribomutase</fullName>
    </alternativeName>
</protein>
<proteinExistence type="inferred from homology"/>
<feature type="chain" id="PRO_1000133081" description="Phosphopentomutase">
    <location>
        <begin position="1"/>
        <end position="413"/>
    </location>
</feature>
<feature type="binding site" evidence="1">
    <location>
        <position position="11"/>
    </location>
    <ligand>
        <name>Mn(2+)</name>
        <dbReference type="ChEBI" id="CHEBI:29035"/>
        <label>1</label>
    </ligand>
</feature>
<feature type="binding site" evidence="1">
    <location>
        <position position="306"/>
    </location>
    <ligand>
        <name>Mn(2+)</name>
        <dbReference type="ChEBI" id="CHEBI:29035"/>
        <label>2</label>
    </ligand>
</feature>
<feature type="binding site" evidence="1">
    <location>
        <position position="311"/>
    </location>
    <ligand>
        <name>Mn(2+)</name>
        <dbReference type="ChEBI" id="CHEBI:29035"/>
        <label>2</label>
    </ligand>
</feature>
<feature type="binding site" evidence="1">
    <location>
        <position position="347"/>
    </location>
    <ligand>
        <name>Mn(2+)</name>
        <dbReference type="ChEBI" id="CHEBI:29035"/>
        <label>1</label>
    </ligand>
</feature>
<feature type="binding site" evidence="1">
    <location>
        <position position="348"/>
    </location>
    <ligand>
        <name>Mn(2+)</name>
        <dbReference type="ChEBI" id="CHEBI:29035"/>
        <label>1</label>
    </ligand>
</feature>
<feature type="binding site" evidence="1">
    <location>
        <position position="359"/>
    </location>
    <ligand>
        <name>Mn(2+)</name>
        <dbReference type="ChEBI" id="CHEBI:29035"/>
        <label>2</label>
    </ligand>
</feature>
<reference key="1">
    <citation type="journal article" date="2009" name="J. Bacteriol.">
        <title>The complete genome sequence of Helicobacter pylori strain G27.</title>
        <authorList>
            <person name="Baltrus D.A."/>
            <person name="Amieva M.R."/>
            <person name="Covacci A."/>
            <person name="Lowe T.M."/>
            <person name="Merrell D.S."/>
            <person name="Ottemann K.M."/>
            <person name="Stein M."/>
            <person name="Salama N.R."/>
            <person name="Guillemin K."/>
        </authorList>
    </citation>
    <scope>NUCLEOTIDE SEQUENCE [LARGE SCALE GENOMIC DNA]</scope>
    <source>
        <strain>G27</strain>
    </source>
</reference>
<organism>
    <name type="scientific">Helicobacter pylori (strain G27)</name>
    <dbReference type="NCBI Taxonomy" id="563041"/>
    <lineage>
        <taxon>Bacteria</taxon>
        <taxon>Pseudomonadati</taxon>
        <taxon>Campylobacterota</taxon>
        <taxon>Epsilonproteobacteria</taxon>
        <taxon>Campylobacterales</taxon>
        <taxon>Helicobacteraceae</taxon>
        <taxon>Helicobacter</taxon>
    </lineage>
</organism>
<sequence>MQKRVVVLLLDSFGIGASEDAKDFGDFGANTLGNIAKACFNNLANSNDRNGALKLPYLESLGLGLSALKATNELPLGFESKPNLIGAYAYAKELSSAKDTISGHWEMMGAPVLFEWGYFKDKTHSFPKEILDEIMHKTKIKGYLGNCHASGTEIIKDLGEKHLETLYPIFYTSADSVFQIAAHEEKFGLDNLYALCEEVFQILEPLKIARVIARPFIGANREDFKRTAKRKDYAIKPHKKLLFEKFIEEKQGEVISIGKIADIYAHVGITQKFKAGSLMELCDVTLDQVKNAKNNSLIFTNFVHFDSDYGHRRDISGYANALEYFDTRLKEVLENLKENDLLILCADHGCDPSFKGTDHTREYIPVLFYHKDLQPAFLGKSESFADIGQSIAYFLGLSPLDYGKNLLKFKGQP</sequence>
<evidence type="ECO:0000255" key="1">
    <source>
        <dbReference type="HAMAP-Rule" id="MF_00740"/>
    </source>
</evidence>
<dbReference type="EC" id="5.4.2.7" evidence="1"/>
<dbReference type="EMBL" id="CP001173">
    <property type="protein sequence ID" value="ACI27872.1"/>
    <property type="molecule type" value="Genomic_DNA"/>
</dbReference>
<dbReference type="RefSeq" id="WP_001172263.1">
    <property type="nucleotide sequence ID" value="NC_011333.1"/>
</dbReference>
<dbReference type="SMR" id="B5Z8H3"/>
<dbReference type="KEGG" id="hpg:HPG27_1122"/>
<dbReference type="HOGENOM" id="CLU_053861_0_0_7"/>
<dbReference type="UniPathway" id="UPA00002">
    <property type="reaction ID" value="UER00467"/>
</dbReference>
<dbReference type="Proteomes" id="UP000001735">
    <property type="component" value="Chromosome"/>
</dbReference>
<dbReference type="GO" id="GO:0005829">
    <property type="term" value="C:cytosol"/>
    <property type="evidence" value="ECO:0007669"/>
    <property type="project" value="TreeGrafter"/>
</dbReference>
<dbReference type="GO" id="GO:0000287">
    <property type="term" value="F:magnesium ion binding"/>
    <property type="evidence" value="ECO:0007669"/>
    <property type="project" value="InterPro"/>
</dbReference>
<dbReference type="GO" id="GO:0030145">
    <property type="term" value="F:manganese ion binding"/>
    <property type="evidence" value="ECO:0007669"/>
    <property type="project" value="UniProtKB-UniRule"/>
</dbReference>
<dbReference type="GO" id="GO:0008973">
    <property type="term" value="F:phosphopentomutase activity"/>
    <property type="evidence" value="ECO:0007669"/>
    <property type="project" value="UniProtKB-UniRule"/>
</dbReference>
<dbReference type="GO" id="GO:0006018">
    <property type="term" value="P:2-deoxyribose 1-phosphate catabolic process"/>
    <property type="evidence" value="ECO:0007669"/>
    <property type="project" value="UniProtKB-UniRule"/>
</dbReference>
<dbReference type="GO" id="GO:0006015">
    <property type="term" value="P:5-phosphoribose 1-diphosphate biosynthetic process"/>
    <property type="evidence" value="ECO:0007669"/>
    <property type="project" value="UniProtKB-UniPathway"/>
</dbReference>
<dbReference type="GO" id="GO:0043094">
    <property type="term" value="P:metabolic compound salvage"/>
    <property type="evidence" value="ECO:0007669"/>
    <property type="project" value="InterPro"/>
</dbReference>
<dbReference type="GO" id="GO:0009117">
    <property type="term" value="P:nucleotide metabolic process"/>
    <property type="evidence" value="ECO:0007669"/>
    <property type="project" value="InterPro"/>
</dbReference>
<dbReference type="CDD" id="cd16009">
    <property type="entry name" value="PPM"/>
    <property type="match status" value="1"/>
</dbReference>
<dbReference type="FunFam" id="3.30.70.1250:FF:000001">
    <property type="entry name" value="Phosphopentomutase"/>
    <property type="match status" value="1"/>
</dbReference>
<dbReference type="Gene3D" id="3.40.720.10">
    <property type="entry name" value="Alkaline Phosphatase, subunit A"/>
    <property type="match status" value="1"/>
</dbReference>
<dbReference type="Gene3D" id="3.30.70.1250">
    <property type="entry name" value="Phosphopentomutase"/>
    <property type="match status" value="1"/>
</dbReference>
<dbReference type="HAMAP" id="MF_00740">
    <property type="entry name" value="Phosphopentomut"/>
    <property type="match status" value="1"/>
</dbReference>
<dbReference type="InterPro" id="IPR017850">
    <property type="entry name" value="Alkaline_phosphatase_core_sf"/>
</dbReference>
<dbReference type="InterPro" id="IPR010045">
    <property type="entry name" value="DeoB"/>
</dbReference>
<dbReference type="InterPro" id="IPR006124">
    <property type="entry name" value="Metalloenzyme"/>
</dbReference>
<dbReference type="InterPro" id="IPR024052">
    <property type="entry name" value="Phosphopentomutase_DeoB_cap_sf"/>
</dbReference>
<dbReference type="NCBIfam" id="TIGR01696">
    <property type="entry name" value="deoB"/>
    <property type="match status" value="1"/>
</dbReference>
<dbReference type="NCBIfam" id="NF003766">
    <property type="entry name" value="PRK05362.1"/>
    <property type="match status" value="1"/>
</dbReference>
<dbReference type="PANTHER" id="PTHR21110">
    <property type="entry name" value="PHOSPHOPENTOMUTASE"/>
    <property type="match status" value="1"/>
</dbReference>
<dbReference type="PANTHER" id="PTHR21110:SF0">
    <property type="entry name" value="PHOSPHOPENTOMUTASE"/>
    <property type="match status" value="1"/>
</dbReference>
<dbReference type="Pfam" id="PF01676">
    <property type="entry name" value="Metalloenzyme"/>
    <property type="match status" value="1"/>
</dbReference>
<dbReference type="PIRSF" id="PIRSF001491">
    <property type="entry name" value="Ppentomutase"/>
    <property type="match status" value="1"/>
</dbReference>
<dbReference type="SUPFAM" id="SSF53649">
    <property type="entry name" value="Alkaline phosphatase-like"/>
    <property type="match status" value="1"/>
</dbReference>
<dbReference type="SUPFAM" id="SSF143856">
    <property type="entry name" value="DeoB insert domain-like"/>
    <property type="match status" value="1"/>
</dbReference>
<comment type="function">
    <text evidence="1">Isomerase that catalyzes the conversion of deoxy-ribose 1-phosphate (dRib-1-P) and ribose 1-phosphate (Rib-1-P) to deoxy-ribose 5-phosphate (dRib-5-P) and ribose 5-phosphate (Rib-5-P), respectively.</text>
</comment>
<comment type="catalytic activity">
    <reaction evidence="1">
        <text>2-deoxy-alpha-D-ribose 1-phosphate = 2-deoxy-D-ribose 5-phosphate</text>
        <dbReference type="Rhea" id="RHEA:27658"/>
        <dbReference type="ChEBI" id="CHEBI:57259"/>
        <dbReference type="ChEBI" id="CHEBI:62877"/>
        <dbReference type="EC" id="5.4.2.7"/>
    </reaction>
</comment>
<comment type="catalytic activity">
    <reaction evidence="1">
        <text>alpha-D-ribose 1-phosphate = D-ribose 5-phosphate</text>
        <dbReference type="Rhea" id="RHEA:18793"/>
        <dbReference type="ChEBI" id="CHEBI:57720"/>
        <dbReference type="ChEBI" id="CHEBI:78346"/>
        <dbReference type="EC" id="5.4.2.7"/>
    </reaction>
</comment>
<comment type="cofactor">
    <cofactor evidence="1">
        <name>Mn(2+)</name>
        <dbReference type="ChEBI" id="CHEBI:29035"/>
    </cofactor>
    <text evidence="1">Binds 2 manganese ions.</text>
</comment>
<comment type="pathway">
    <text evidence="1">Carbohydrate degradation; 2-deoxy-D-ribose 1-phosphate degradation; D-glyceraldehyde 3-phosphate and acetaldehyde from 2-deoxy-alpha-D-ribose 1-phosphate: step 1/2.</text>
</comment>
<comment type="subcellular location">
    <subcellularLocation>
        <location evidence="1">Cytoplasm</location>
    </subcellularLocation>
</comment>
<comment type="similarity">
    <text evidence="1">Belongs to the phosphopentomutase family.</text>
</comment>
<gene>
    <name evidence="1" type="primary">deoB</name>
    <name type="ordered locus">HPG27_1122</name>
</gene>
<keyword id="KW-0963">Cytoplasm</keyword>
<keyword id="KW-0413">Isomerase</keyword>
<keyword id="KW-0464">Manganese</keyword>
<keyword id="KW-0479">Metal-binding</keyword>
<keyword id="KW-1185">Reference proteome</keyword>